<comment type="function">
    <text evidence="1">Catalyzes the NAD(+)-dependent oxidation of L-threonine to 2-amino-3-ketobutyrate.</text>
</comment>
<comment type="catalytic activity">
    <reaction evidence="1">
        <text>L-threonine + NAD(+) = (2S)-2-amino-3-oxobutanoate + NADH + H(+)</text>
        <dbReference type="Rhea" id="RHEA:13161"/>
        <dbReference type="ChEBI" id="CHEBI:15378"/>
        <dbReference type="ChEBI" id="CHEBI:57540"/>
        <dbReference type="ChEBI" id="CHEBI:57926"/>
        <dbReference type="ChEBI" id="CHEBI:57945"/>
        <dbReference type="ChEBI" id="CHEBI:78948"/>
        <dbReference type="EC" id="1.1.1.103"/>
    </reaction>
</comment>
<comment type="cofactor">
    <cofactor evidence="1">
        <name>Zn(2+)</name>
        <dbReference type="ChEBI" id="CHEBI:29105"/>
    </cofactor>
    <text evidence="1">Binds 2 Zn(2+) ions per subunit.</text>
</comment>
<comment type="pathway">
    <text evidence="1">Amino-acid degradation; L-threonine degradation via oxydo-reductase pathway; glycine from L-threonine: step 1/2.</text>
</comment>
<comment type="subunit">
    <text evidence="1">Homotetramer.</text>
</comment>
<comment type="subcellular location">
    <subcellularLocation>
        <location evidence="1">Cytoplasm</location>
    </subcellularLocation>
</comment>
<comment type="similarity">
    <text evidence="1">Belongs to the zinc-containing alcohol dehydrogenase family.</text>
</comment>
<feature type="chain" id="PRO_0000160832" description="L-threonine 3-dehydrogenase">
    <location>
        <begin position="1"/>
        <end position="343"/>
    </location>
</feature>
<feature type="active site" description="Charge relay system" evidence="1">
    <location>
        <position position="40"/>
    </location>
</feature>
<feature type="active site" description="Charge relay system" evidence="1">
    <location>
        <position position="43"/>
    </location>
</feature>
<feature type="binding site" evidence="1">
    <location>
        <position position="38"/>
    </location>
    <ligand>
        <name>Zn(2+)</name>
        <dbReference type="ChEBI" id="CHEBI:29105"/>
        <label>1</label>
        <note>catalytic</note>
    </ligand>
</feature>
<feature type="binding site" evidence="1">
    <location>
        <position position="63"/>
    </location>
    <ligand>
        <name>Zn(2+)</name>
        <dbReference type="ChEBI" id="CHEBI:29105"/>
        <label>1</label>
        <note>catalytic</note>
    </ligand>
</feature>
<feature type="binding site" evidence="1">
    <location>
        <position position="64"/>
    </location>
    <ligand>
        <name>Zn(2+)</name>
        <dbReference type="ChEBI" id="CHEBI:29105"/>
        <label>1</label>
        <note>catalytic</note>
    </ligand>
</feature>
<feature type="binding site" evidence="1">
    <location>
        <position position="93"/>
    </location>
    <ligand>
        <name>Zn(2+)</name>
        <dbReference type="ChEBI" id="CHEBI:29105"/>
        <label>2</label>
    </ligand>
</feature>
<feature type="binding site" evidence="1">
    <location>
        <position position="96"/>
    </location>
    <ligand>
        <name>Zn(2+)</name>
        <dbReference type="ChEBI" id="CHEBI:29105"/>
        <label>2</label>
    </ligand>
</feature>
<feature type="binding site" evidence="1">
    <location>
        <position position="99"/>
    </location>
    <ligand>
        <name>Zn(2+)</name>
        <dbReference type="ChEBI" id="CHEBI:29105"/>
        <label>2</label>
    </ligand>
</feature>
<feature type="binding site" evidence="1">
    <location>
        <position position="107"/>
    </location>
    <ligand>
        <name>Zn(2+)</name>
        <dbReference type="ChEBI" id="CHEBI:29105"/>
        <label>2</label>
    </ligand>
</feature>
<feature type="binding site" evidence="1">
    <location>
        <position position="175"/>
    </location>
    <ligand>
        <name>NAD(+)</name>
        <dbReference type="ChEBI" id="CHEBI:57540"/>
    </ligand>
</feature>
<feature type="binding site" evidence="1">
    <location>
        <position position="195"/>
    </location>
    <ligand>
        <name>NAD(+)</name>
        <dbReference type="ChEBI" id="CHEBI:57540"/>
    </ligand>
</feature>
<feature type="binding site" evidence="1">
    <location>
        <position position="200"/>
    </location>
    <ligand>
        <name>NAD(+)</name>
        <dbReference type="ChEBI" id="CHEBI:57540"/>
    </ligand>
</feature>
<feature type="binding site" evidence="1">
    <location>
        <begin position="262"/>
        <end position="264"/>
    </location>
    <ligand>
        <name>NAD(+)</name>
        <dbReference type="ChEBI" id="CHEBI:57540"/>
    </ligand>
</feature>
<feature type="binding site" evidence="1">
    <location>
        <begin position="286"/>
        <end position="287"/>
    </location>
    <ligand>
        <name>NAD(+)</name>
        <dbReference type="ChEBI" id="CHEBI:57540"/>
    </ligand>
</feature>
<feature type="site" description="Important for catalytic activity for the proton relay mechanism but does not participate directly in the coordination of zinc atom" evidence="1">
    <location>
        <position position="148"/>
    </location>
</feature>
<sequence length="343" mass="37461">MKALAKLERGPGLTLTRVKKPEVGHNDVLIKIRRTAICGTDIHIWKWDDWAQKTIPVPMHVGHEYVGEIVEMGQEVRGFSIGDRVSGEGHITCGFCRNCRAGRRHLCRNTVGVGVNREGAFAEYLAIPAFNAFKIPPEISDDLAAIFDPFGNATHTALSFNLVGEDVLITGAGPIGVMAVAIAKHVGARNVVITDINDYRLELARKMGATRAVNVSRESLRDVMADLHMTEGFDVGLEMSGVPSAFTSLLESMNHGGKVALLGIPPAQTAIDWNQVIFKGLEIKGIYGREMFETWYKMVAMLQSGLDLSPIITHRFAVDDYEKGFAAMLSGESGKVILDWADA</sequence>
<dbReference type="EC" id="1.1.1.103" evidence="1"/>
<dbReference type="EMBL" id="CP000011">
    <property type="protein sequence ID" value="AAU45574.1"/>
    <property type="molecule type" value="Genomic_DNA"/>
</dbReference>
<dbReference type="RefSeq" id="WP_004194543.1">
    <property type="nucleotide sequence ID" value="NC_006349.2"/>
</dbReference>
<dbReference type="RefSeq" id="YP_104863.1">
    <property type="nucleotide sequence ID" value="NC_006349.2"/>
</dbReference>
<dbReference type="SMR" id="Q62EL5"/>
<dbReference type="GeneID" id="93062068"/>
<dbReference type="KEGG" id="bma:BMAA0006"/>
<dbReference type="PATRIC" id="fig|243160.12.peg.3496"/>
<dbReference type="eggNOG" id="COG1063">
    <property type="taxonomic scope" value="Bacteria"/>
</dbReference>
<dbReference type="HOGENOM" id="CLU_026673_11_0_4"/>
<dbReference type="UniPathway" id="UPA00046">
    <property type="reaction ID" value="UER00505"/>
</dbReference>
<dbReference type="Proteomes" id="UP000006693">
    <property type="component" value="Chromosome 2"/>
</dbReference>
<dbReference type="GO" id="GO:0005737">
    <property type="term" value="C:cytoplasm"/>
    <property type="evidence" value="ECO:0007669"/>
    <property type="project" value="UniProtKB-SubCell"/>
</dbReference>
<dbReference type="GO" id="GO:0008743">
    <property type="term" value="F:L-threonine 3-dehydrogenase activity"/>
    <property type="evidence" value="ECO:0007669"/>
    <property type="project" value="UniProtKB-UniRule"/>
</dbReference>
<dbReference type="GO" id="GO:0008270">
    <property type="term" value="F:zinc ion binding"/>
    <property type="evidence" value="ECO:0007669"/>
    <property type="project" value="UniProtKB-UniRule"/>
</dbReference>
<dbReference type="GO" id="GO:0019518">
    <property type="term" value="P:L-threonine catabolic process to glycine"/>
    <property type="evidence" value="ECO:0007669"/>
    <property type="project" value="UniProtKB-UniPathway"/>
</dbReference>
<dbReference type="Gene3D" id="3.90.180.10">
    <property type="entry name" value="Medium-chain alcohol dehydrogenases, catalytic domain"/>
    <property type="match status" value="1"/>
</dbReference>
<dbReference type="Gene3D" id="3.40.50.720">
    <property type="entry name" value="NAD(P)-binding Rossmann-like Domain"/>
    <property type="match status" value="1"/>
</dbReference>
<dbReference type="HAMAP" id="MF_00627">
    <property type="entry name" value="Thr_dehydrog"/>
    <property type="match status" value="1"/>
</dbReference>
<dbReference type="InterPro" id="IPR013149">
    <property type="entry name" value="ADH-like_C"/>
</dbReference>
<dbReference type="InterPro" id="IPR013154">
    <property type="entry name" value="ADH-like_N"/>
</dbReference>
<dbReference type="InterPro" id="IPR002328">
    <property type="entry name" value="ADH_Zn_CS"/>
</dbReference>
<dbReference type="InterPro" id="IPR011032">
    <property type="entry name" value="GroES-like_sf"/>
</dbReference>
<dbReference type="InterPro" id="IPR004627">
    <property type="entry name" value="L-Threonine_3-DHase"/>
</dbReference>
<dbReference type="InterPro" id="IPR036291">
    <property type="entry name" value="NAD(P)-bd_dom_sf"/>
</dbReference>
<dbReference type="InterPro" id="IPR020843">
    <property type="entry name" value="PKS_ER"/>
</dbReference>
<dbReference type="InterPro" id="IPR050129">
    <property type="entry name" value="Zn_alcohol_dh"/>
</dbReference>
<dbReference type="NCBIfam" id="NF003808">
    <property type="entry name" value="PRK05396.1"/>
    <property type="match status" value="1"/>
</dbReference>
<dbReference type="NCBIfam" id="TIGR00692">
    <property type="entry name" value="tdh"/>
    <property type="match status" value="1"/>
</dbReference>
<dbReference type="PANTHER" id="PTHR43401">
    <property type="entry name" value="L-THREONINE 3-DEHYDROGENASE"/>
    <property type="match status" value="1"/>
</dbReference>
<dbReference type="PANTHER" id="PTHR43401:SF2">
    <property type="entry name" value="L-THREONINE 3-DEHYDROGENASE"/>
    <property type="match status" value="1"/>
</dbReference>
<dbReference type="Pfam" id="PF08240">
    <property type="entry name" value="ADH_N"/>
    <property type="match status" value="1"/>
</dbReference>
<dbReference type="Pfam" id="PF00107">
    <property type="entry name" value="ADH_zinc_N"/>
    <property type="match status" value="1"/>
</dbReference>
<dbReference type="SMART" id="SM00829">
    <property type="entry name" value="PKS_ER"/>
    <property type="match status" value="1"/>
</dbReference>
<dbReference type="SUPFAM" id="SSF50129">
    <property type="entry name" value="GroES-like"/>
    <property type="match status" value="1"/>
</dbReference>
<dbReference type="SUPFAM" id="SSF51735">
    <property type="entry name" value="NAD(P)-binding Rossmann-fold domains"/>
    <property type="match status" value="1"/>
</dbReference>
<dbReference type="PROSITE" id="PS00059">
    <property type="entry name" value="ADH_ZINC"/>
    <property type="match status" value="1"/>
</dbReference>
<proteinExistence type="inferred from homology"/>
<organism>
    <name type="scientific">Burkholderia mallei (strain ATCC 23344)</name>
    <dbReference type="NCBI Taxonomy" id="243160"/>
    <lineage>
        <taxon>Bacteria</taxon>
        <taxon>Pseudomonadati</taxon>
        <taxon>Pseudomonadota</taxon>
        <taxon>Betaproteobacteria</taxon>
        <taxon>Burkholderiales</taxon>
        <taxon>Burkholderiaceae</taxon>
        <taxon>Burkholderia</taxon>
        <taxon>pseudomallei group</taxon>
    </lineage>
</organism>
<keyword id="KW-0963">Cytoplasm</keyword>
<keyword id="KW-0479">Metal-binding</keyword>
<keyword id="KW-0520">NAD</keyword>
<keyword id="KW-0560">Oxidoreductase</keyword>
<keyword id="KW-1185">Reference proteome</keyword>
<keyword id="KW-0862">Zinc</keyword>
<evidence type="ECO:0000255" key="1">
    <source>
        <dbReference type="HAMAP-Rule" id="MF_00627"/>
    </source>
</evidence>
<accession>Q62EL5</accession>
<protein>
    <recommendedName>
        <fullName evidence="1">L-threonine 3-dehydrogenase</fullName>
        <shortName evidence="1">TDH</shortName>
        <ecNumber evidence="1">1.1.1.103</ecNumber>
    </recommendedName>
</protein>
<gene>
    <name evidence="1" type="primary">tdh</name>
    <name type="ordered locus">BMAA0006</name>
</gene>
<name>TDH_BURMA</name>
<reference key="1">
    <citation type="journal article" date="2004" name="Proc. Natl. Acad. Sci. U.S.A.">
        <title>Structural flexibility in the Burkholderia mallei genome.</title>
        <authorList>
            <person name="Nierman W.C."/>
            <person name="DeShazer D."/>
            <person name="Kim H.S."/>
            <person name="Tettelin H."/>
            <person name="Nelson K.E."/>
            <person name="Feldblyum T.V."/>
            <person name="Ulrich R.L."/>
            <person name="Ronning C.M."/>
            <person name="Brinkac L.M."/>
            <person name="Daugherty S.C."/>
            <person name="Davidsen T.D."/>
            <person name="DeBoy R.T."/>
            <person name="Dimitrov G."/>
            <person name="Dodson R.J."/>
            <person name="Durkin A.S."/>
            <person name="Gwinn M.L."/>
            <person name="Haft D.H."/>
            <person name="Khouri H.M."/>
            <person name="Kolonay J.F."/>
            <person name="Madupu R."/>
            <person name="Mohammoud Y."/>
            <person name="Nelson W.C."/>
            <person name="Radune D."/>
            <person name="Romero C.M."/>
            <person name="Sarria S."/>
            <person name="Selengut J."/>
            <person name="Shamblin C."/>
            <person name="Sullivan S.A."/>
            <person name="White O."/>
            <person name="Yu Y."/>
            <person name="Zafar N."/>
            <person name="Zhou L."/>
            <person name="Fraser C.M."/>
        </authorList>
    </citation>
    <scope>NUCLEOTIDE SEQUENCE [LARGE SCALE GENOMIC DNA]</scope>
    <source>
        <strain>ATCC 23344</strain>
    </source>
</reference>